<dbReference type="EMBL" id="CP000868">
    <property type="protein sequence ID" value="ABX14144.1"/>
    <property type="molecule type" value="Genomic_DNA"/>
</dbReference>
<dbReference type="EMBL" id="AP009385">
    <property type="protein sequence ID" value="BAG44694.1"/>
    <property type="molecule type" value="Genomic_DNA"/>
</dbReference>
<dbReference type="RefSeq" id="WP_006398189.1">
    <property type="nucleotide sequence ID" value="NC_010804.1"/>
</dbReference>
<dbReference type="SMR" id="A9AEK0"/>
<dbReference type="STRING" id="395019.BMULJ_02806"/>
<dbReference type="GeneID" id="89571384"/>
<dbReference type="KEGG" id="bmj:BMULJ_02806"/>
<dbReference type="KEGG" id="bmu:Bmul_0449"/>
<dbReference type="eggNOG" id="COG1952">
    <property type="taxonomic scope" value="Bacteria"/>
</dbReference>
<dbReference type="HOGENOM" id="CLU_111574_1_0_4"/>
<dbReference type="Proteomes" id="UP000008815">
    <property type="component" value="Chromosome 1"/>
</dbReference>
<dbReference type="GO" id="GO:0005737">
    <property type="term" value="C:cytoplasm"/>
    <property type="evidence" value="ECO:0007669"/>
    <property type="project" value="UniProtKB-SubCell"/>
</dbReference>
<dbReference type="GO" id="GO:0051082">
    <property type="term" value="F:unfolded protein binding"/>
    <property type="evidence" value="ECO:0007669"/>
    <property type="project" value="InterPro"/>
</dbReference>
<dbReference type="GO" id="GO:0006457">
    <property type="term" value="P:protein folding"/>
    <property type="evidence" value="ECO:0007669"/>
    <property type="project" value="UniProtKB-UniRule"/>
</dbReference>
<dbReference type="GO" id="GO:0051262">
    <property type="term" value="P:protein tetramerization"/>
    <property type="evidence" value="ECO:0007669"/>
    <property type="project" value="InterPro"/>
</dbReference>
<dbReference type="GO" id="GO:0015031">
    <property type="term" value="P:protein transport"/>
    <property type="evidence" value="ECO:0007669"/>
    <property type="project" value="UniProtKB-UniRule"/>
</dbReference>
<dbReference type="Gene3D" id="3.10.420.10">
    <property type="entry name" value="SecB-like"/>
    <property type="match status" value="1"/>
</dbReference>
<dbReference type="HAMAP" id="MF_00821">
    <property type="entry name" value="SecB"/>
    <property type="match status" value="1"/>
</dbReference>
<dbReference type="InterPro" id="IPR003708">
    <property type="entry name" value="SecB"/>
</dbReference>
<dbReference type="InterPro" id="IPR035958">
    <property type="entry name" value="SecB-like_sf"/>
</dbReference>
<dbReference type="NCBIfam" id="NF004392">
    <property type="entry name" value="PRK05751.1-3"/>
    <property type="match status" value="1"/>
</dbReference>
<dbReference type="NCBIfam" id="NF004394">
    <property type="entry name" value="PRK05751.1-5"/>
    <property type="match status" value="1"/>
</dbReference>
<dbReference type="NCBIfam" id="TIGR00809">
    <property type="entry name" value="secB"/>
    <property type="match status" value="1"/>
</dbReference>
<dbReference type="PANTHER" id="PTHR36918">
    <property type="match status" value="1"/>
</dbReference>
<dbReference type="PANTHER" id="PTHR36918:SF1">
    <property type="entry name" value="PROTEIN-EXPORT PROTEIN SECB"/>
    <property type="match status" value="1"/>
</dbReference>
<dbReference type="Pfam" id="PF02556">
    <property type="entry name" value="SecB"/>
    <property type="match status" value="1"/>
</dbReference>
<dbReference type="PRINTS" id="PR01594">
    <property type="entry name" value="SECBCHAPRONE"/>
</dbReference>
<dbReference type="SUPFAM" id="SSF54611">
    <property type="entry name" value="SecB-like"/>
    <property type="match status" value="1"/>
</dbReference>
<protein>
    <recommendedName>
        <fullName evidence="1">Protein-export protein SecB</fullName>
    </recommendedName>
</protein>
<comment type="function">
    <text evidence="1">One of the proteins required for the normal export of preproteins out of the cell cytoplasm. It is a molecular chaperone that binds to a subset of precursor proteins, maintaining them in a translocation-competent state. It also specifically binds to its receptor SecA.</text>
</comment>
<comment type="subunit">
    <text evidence="1">Homotetramer, a dimer of dimers. One homotetramer interacts with 1 SecA dimer.</text>
</comment>
<comment type="subcellular location">
    <subcellularLocation>
        <location evidence="1">Cytoplasm</location>
    </subcellularLocation>
</comment>
<comment type="similarity">
    <text evidence="1">Belongs to the SecB family.</text>
</comment>
<keyword id="KW-0143">Chaperone</keyword>
<keyword id="KW-0963">Cytoplasm</keyword>
<keyword id="KW-0653">Protein transport</keyword>
<keyword id="KW-1185">Reference proteome</keyword>
<keyword id="KW-0811">Translocation</keyword>
<keyword id="KW-0813">Transport</keyword>
<reference key="1">
    <citation type="submission" date="2007-10" db="EMBL/GenBank/DDBJ databases">
        <title>Complete sequence of chromosome 1 of Burkholderia multivorans ATCC 17616.</title>
        <authorList>
            <person name="Copeland A."/>
            <person name="Lucas S."/>
            <person name="Lapidus A."/>
            <person name="Barry K."/>
            <person name="Glavina del Rio T."/>
            <person name="Dalin E."/>
            <person name="Tice H."/>
            <person name="Pitluck S."/>
            <person name="Chain P."/>
            <person name="Malfatti S."/>
            <person name="Shin M."/>
            <person name="Vergez L."/>
            <person name="Schmutz J."/>
            <person name="Larimer F."/>
            <person name="Land M."/>
            <person name="Hauser L."/>
            <person name="Kyrpides N."/>
            <person name="Kim E."/>
            <person name="Tiedje J."/>
            <person name="Richardson P."/>
        </authorList>
    </citation>
    <scope>NUCLEOTIDE SEQUENCE [LARGE SCALE GENOMIC DNA]</scope>
    <source>
        <strain>ATCC 17616 / 249</strain>
    </source>
</reference>
<reference key="2">
    <citation type="submission" date="2007-04" db="EMBL/GenBank/DDBJ databases">
        <title>Complete genome sequence of Burkholderia multivorans ATCC 17616.</title>
        <authorList>
            <person name="Ohtsubo Y."/>
            <person name="Yamashita A."/>
            <person name="Kurokawa K."/>
            <person name="Takami H."/>
            <person name="Yuhara S."/>
            <person name="Nishiyama E."/>
            <person name="Endo R."/>
            <person name="Miyazaki R."/>
            <person name="Ono A."/>
            <person name="Yano K."/>
            <person name="Ito M."/>
            <person name="Sota M."/>
            <person name="Yuji N."/>
            <person name="Hattori M."/>
            <person name="Tsuda M."/>
        </authorList>
    </citation>
    <scope>NUCLEOTIDE SEQUENCE [LARGE SCALE GENOMIC DNA]</scope>
    <source>
        <strain>ATCC 17616 / 249</strain>
    </source>
</reference>
<organism>
    <name type="scientific">Burkholderia multivorans (strain ATCC 17616 / 249)</name>
    <dbReference type="NCBI Taxonomy" id="395019"/>
    <lineage>
        <taxon>Bacteria</taxon>
        <taxon>Pseudomonadati</taxon>
        <taxon>Pseudomonadota</taxon>
        <taxon>Betaproteobacteria</taxon>
        <taxon>Burkholderiales</taxon>
        <taxon>Burkholderiaceae</taxon>
        <taxon>Burkholderia</taxon>
        <taxon>Burkholderia cepacia complex</taxon>
    </lineage>
</organism>
<accession>A9AEK0</accession>
<gene>
    <name evidence="1" type="primary">secB</name>
    <name type="ordered locus">Bmul_0449</name>
    <name type="ordered locus">BMULJ_02806</name>
</gene>
<feature type="chain" id="PRO_1000134368" description="Protein-export protein SecB">
    <location>
        <begin position="1"/>
        <end position="160"/>
    </location>
</feature>
<name>SECB_BURM1</name>
<proteinExistence type="inferred from homology"/>
<evidence type="ECO:0000255" key="1">
    <source>
        <dbReference type="HAMAP-Rule" id="MF_00821"/>
    </source>
</evidence>
<sequence>MSDVENQPFFNIQRVYLKDMSLEQPNSPAIFLEQDMPSVEVEVDVKAERLAESVFEVVVSGTVTAKVKDKVAFLIEAKQAGIFDIRNIPDEQLDPLVGIACPTILFPYLRSNIADAITRAGFPPIHLAEINFQALYEQRLAQLQQQQAGAAGAPNGTALN</sequence>